<gene>
    <name type="ordered locus">Clos_1257</name>
</gene>
<organism>
    <name type="scientific">Alkaliphilus oremlandii (strain OhILAs)</name>
    <name type="common">Clostridium oremlandii (strain OhILAs)</name>
    <dbReference type="NCBI Taxonomy" id="350688"/>
    <lineage>
        <taxon>Bacteria</taxon>
        <taxon>Bacillati</taxon>
        <taxon>Bacillota</taxon>
        <taxon>Clostridia</taxon>
        <taxon>Peptostreptococcales</taxon>
        <taxon>Natronincolaceae</taxon>
        <taxon>Alkaliphilus</taxon>
    </lineage>
</organism>
<protein>
    <recommendedName>
        <fullName evidence="1">Putative pyruvate, phosphate dikinase regulatory protein</fullName>
        <shortName evidence="1">PPDK regulatory protein</shortName>
        <ecNumber evidence="1">2.7.11.32</ecNumber>
        <ecNumber evidence="1">2.7.4.27</ecNumber>
    </recommendedName>
</protein>
<accession>A8MG75</accession>
<evidence type="ECO:0000255" key="1">
    <source>
        <dbReference type="HAMAP-Rule" id="MF_00921"/>
    </source>
</evidence>
<keyword id="KW-0418">Kinase</keyword>
<keyword id="KW-0547">Nucleotide-binding</keyword>
<keyword id="KW-1185">Reference proteome</keyword>
<keyword id="KW-0723">Serine/threonine-protein kinase</keyword>
<keyword id="KW-0808">Transferase</keyword>
<sequence>MSKANLVIYVISDSIGETAEQVAKAAVSQFKTEDYEIRRFPYINEKRQILEILEEAKNENAVIAFTIVISELREFLIEEAVHLNIPYADVITPILSAMESVLEIPAKKEPGLIRKLDERYFRKVEAIEFAVKYDDGKDTRGLKQADIVLTGISRTSKTPLSMYLAHKNLKVANVPLVPEVAPPRELFEINPKKIIGLTTNPVKLIEIRQERLKALGLKNEANYASMERIFEELEYADGIMKRLGCPVIDVSTKAIEESAGIILEIFKEMGHKFSNGK</sequence>
<name>PDRP_ALKOO</name>
<dbReference type="EC" id="2.7.11.32" evidence="1"/>
<dbReference type="EC" id="2.7.4.27" evidence="1"/>
<dbReference type="EMBL" id="CP000853">
    <property type="protein sequence ID" value="ABW18803.1"/>
    <property type="molecule type" value="Genomic_DNA"/>
</dbReference>
<dbReference type="RefSeq" id="WP_012159115.1">
    <property type="nucleotide sequence ID" value="NC_009922.1"/>
</dbReference>
<dbReference type="SMR" id="A8MG75"/>
<dbReference type="STRING" id="350688.Clos_1257"/>
<dbReference type="KEGG" id="aoe:Clos_1257"/>
<dbReference type="eggNOG" id="COG1806">
    <property type="taxonomic scope" value="Bacteria"/>
</dbReference>
<dbReference type="HOGENOM" id="CLU_046206_2_1_9"/>
<dbReference type="OrthoDB" id="9782201at2"/>
<dbReference type="Proteomes" id="UP000000269">
    <property type="component" value="Chromosome"/>
</dbReference>
<dbReference type="GO" id="GO:0043531">
    <property type="term" value="F:ADP binding"/>
    <property type="evidence" value="ECO:0007669"/>
    <property type="project" value="UniProtKB-UniRule"/>
</dbReference>
<dbReference type="GO" id="GO:0005524">
    <property type="term" value="F:ATP binding"/>
    <property type="evidence" value="ECO:0007669"/>
    <property type="project" value="InterPro"/>
</dbReference>
<dbReference type="GO" id="GO:0016776">
    <property type="term" value="F:phosphotransferase activity, phosphate group as acceptor"/>
    <property type="evidence" value="ECO:0007669"/>
    <property type="project" value="UniProtKB-UniRule"/>
</dbReference>
<dbReference type="GO" id="GO:0004674">
    <property type="term" value="F:protein serine/threonine kinase activity"/>
    <property type="evidence" value="ECO:0007669"/>
    <property type="project" value="UniProtKB-UniRule"/>
</dbReference>
<dbReference type="HAMAP" id="MF_00921">
    <property type="entry name" value="PDRP"/>
    <property type="match status" value="1"/>
</dbReference>
<dbReference type="InterPro" id="IPR005177">
    <property type="entry name" value="Kinase-pyrophosphorylase"/>
</dbReference>
<dbReference type="InterPro" id="IPR026565">
    <property type="entry name" value="PPDK_reg"/>
</dbReference>
<dbReference type="NCBIfam" id="NF003742">
    <property type="entry name" value="PRK05339.1"/>
    <property type="match status" value="1"/>
</dbReference>
<dbReference type="PANTHER" id="PTHR31756">
    <property type="entry name" value="PYRUVATE, PHOSPHATE DIKINASE REGULATORY PROTEIN 1, CHLOROPLASTIC"/>
    <property type="match status" value="1"/>
</dbReference>
<dbReference type="PANTHER" id="PTHR31756:SF3">
    <property type="entry name" value="PYRUVATE, PHOSPHATE DIKINASE REGULATORY PROTEIN 1, CHLOROPLASTIC"/>
    <property type="match status" value="1"/>
</dbReference>
<dbReference type="Pfam" id="PF03618">
    <property type="entry name" value="Kinase-PPPase"/>
    <property type="match status" value="1"/>
</dbReference>
<feature type="chain" id="PRO_1000073002" description="Putative pyruvate, phosphate dikinase regulatory protein">
    <location>
        <begin position="1"/>
        <end position="277"/>
    </location>
</feature>
<feature type="binding site" evidence="1">
    <location>
        <begin position="151"/>
        <end position="158"/>
    </location>
    <ligand>
        <name>ADP</name>
        <dbReference type="ChEBI" id="CHEBI:456216"/>
    </ligand>
</feature>
<comment type="function">
    <text evidence="1">Bifunctional serine/threonine kinase and phosphorylase involved in the regulation of the pyruvate, phosphate dikinase (PPDK) by catalyzing its phosphorylation/dephosphorylation.</text>
</comment>
<comment type="catalytic activity">
    <reaction evidence="1">
        <text>N(tele)-phospho-L-histidyl/L-threonyl-[pyruvate, phosphate dikinase] + ADP = N(tele)-phospho-L-histidyl/O-phospho-L-threonyl-[pyruvate, phosphate dikinase] + AMP + H(+)</text>
        <dbReference type="Rhea" id="RHEA:43692"/>
        <dbReference type="Rhea" id="RHEA-COMP:10650"/>
        <dbReference type="Rhea" id="RHEA-COMP:10651"/>
        <dbReference type="ChEBI" id="CHEBI:15378"/>
        <dbReference type="ChEBI" id="CHEBI:30013"/>
        <dbReference type="ChEBI" id="CHEBI:61977"/>
        <dbReference type="ChEBI" id="CHEBI:83586"/>
        <dbReference type="ChEBI" id="CHEBI:456215"/>
        <dbReference type="ChEBI" id="CHEBI:456216"/>
        <dbReference type="EC" id="2.7.11.32"/>
    </reaction>
</comment>
<comment type="catalytic activity">
    <reaction evidence="1">
        <text>N(tele)-phospho-L-histidyl/O-phospho-L-threonyl-[pyruvate, phosphate dikinase] + phosphate + H(+) = N(tele)-phospho-L-histidyl/L-threonyl-[pyruvate, phosphate dikinase] + diphosphate</text>
        <dbReference type="Rhea" id="RHEA:43696"/>
        <dbReference type="Rhea" id="RHEA-COMP:10650"/>
        <dbReference type="Rhea" id="RHEA-COMP:10651"/>
        <dbReference type="ChEBI" id="CHEBI:15378"/>
        <dbReference type="ChEBI" id="CHEBI:30013"/>
        <dbReference type="ChEBI" id="CHEBI:33019"/>
        <dbReference type="ChEBI" id="CHEBI:43474"/>
        <dbReference type="ChEBI" id="CHEBI:61977"/>
        <dbReference type="ChEBI" id="CHEBI:83586"/>
        <dbReference type="EC" id="2.7.4.27"/>
    </reaction>
</comment>
<comment type="similarity">
    <text evidence="1">Belongs to the pyruvate, phosphate/water dikinase regulatory protein family. PDRP subfamily.</text>
</comment>
<proteinExistence type="inferred from homology"/>
<reference key="1">
    <citation type="submission" date="2007-10" db="EMBL/GenBank/DDBJ databases">
        <title>Complete genome of Alkaliphilus oremlandii OhILAs.</title>
        <authorList>
            <person name="Copeland A."/>
            <person name="Lucas S."/>
            <person name="Lapidus A."/>
            <person name="Barry K."/>
            <person name="Detter J.C."/>
            <person name="Glavina del Rio T."/>
            <person name="Hammon N."/>
            <person name="Israni S."/>
            <person name="Dalin E."/>
            <person name="Tice H."/>
            <person name="Pitluck S."/>
            <person name="Chain P."/>
            <person name="Malfatti S."/>
            <person name="Shin M."/>
            <person name="Vergez L."/>
            <person name="Schmutz J."/>
            <person name="Larimer F."/>
            <person name="Land M."/>
            <person name="Hauser L."/>
            <person name="Kyrpides N."/>
            <person name="Mikhailova N."/>
            <person name="Stolz J.F."/>
            <person name="Dawson A."/>
            <person name="Fisher E."/>
            <person name="Crable B."/>
            <person name="Perera E."/>
            <person name="Lisak J."/>
            <person name="Ranganathan M."/>
            <person name="Basu P."/>
            <person name="Richardson P."/>
        </authorList>
    </citation>
    <scope>NUCLEOTIDE SEQUENCE [LARGE SCALE GENOMIC DNA]</scope>
    <source>
        <strain>OhILAs</strain>
    </source>
</reference>